<gene>
    <name evidence="1" type="primary">hutG</name>
    <name type="ordered locus">STY0821</name>
    <name type="ordered locus">t2099</name>
</gene>
<proteinExistence type="inferred from homology"/>
<protein>
    <recommendedName>
        <fullName evidence="1">Formimidoylglutamase</fullName>
        <ecNumber evidence="1">3.5.3.8</ecNumber>
    </recommendedName>
    <alternativeName>
        <fullName evidence="1">Formiminoglutamase</fullName>
    </alternativeName>
    <alternativeName>
        <fullName evidence="1">Formiminoglutamate hydrolase</fullName>
    </alternativeName>
</protein>
<accession>Q8Z899</accession>
<accession>Q83T11</accession>
<name>HUTG_SALTI</name>
<keyword id="KW-0369">Histidine metabolism</keyword>
<keyword id="KW-0378">Hydrolase</keyword>
<keyword id="KW-0464">Manganese</keyword>
<keyword id="KW-0479">Metal-binding</keyword>
<feature type="chain" id="PRO_0000173764" description="Formimidoylglutamase">
    <location>
        <begin position="1"/>
        <end position="313"/>
    </location>
</feature>
<feature type="binding site" evidence="1">
    <location>
        <position position="130"/>
    </location>
    <ligand>
        <name>Mn(2+)</name>
        <dbReference type="ChEBI" id="CHEBI:29035"/>
        <label>1</label>
    </ligand>
</feature>
<feature type="binding site" evidence="1">
    <location>
        <position position="155"/>
    </location>
    <ligand>
        <name>Mn(2+)</name>
        <dbReference type="ChEBI" id="CHEBI:29035"/>
        <label>1</label>
    </ligand>
</feature>
<feature type="binding site" evidence="1">
    <location>
        <position position="155"/>
    </location>
    <ligand>
        <name>Mn(2+)</name>
        <dbReference type="ChEBI" id="CHEBI:29035"/>
        <label>2</label>
    </ligand>
</feature>
<feature type="binding site" evidence="1">
    <location>
        <position position="157"/>
    </location>
    <ligand>
        <name>Mn(2+)</name>
        <dbReference type="ChEBI" id="CHEBI:29035"/>
        <label>2</label>
    </ligand>
</feature>
<feature type="binding site" evidence="1">
    <location>
        <position position="159"/>
    </location>
    <ligand>
        <name>Mn(2+)</name>
        <dbReference type="ChEBI" id="CHEBI:29035"/>
        <label>1</label>
    </ligand>
</feature>
<feature type="binding site" evidence="1">
    <location>
        <position position="241"/>
    </location>
    <ligand>
        <name>Mn(2+)</name>
        <dbReference type="ChEBI" id="CHEBI:29035"/>
        <label>1</label>
    </ligand>
</feature>
<feature type="binding site" evidence="1">
    <location>
        <position position="241"/>
    </location>
    <ligand>
        <name>Mn(2+)</name>
        <dbReference type="ChEBI" id="CHEBI:29035"/>
        <label>2</label>
    </ligand>
</feature>
<feature type="binding site" evidence="1">
    <location>
        <position position="243"/>
    </location>
    <ligand>
        <name>Mn(2+)</name>
        <dbReference type="ChEBI" id="CHEBI:29035"/>
        <label>2</label>
    </ligand>
</feature>
<feature type="sequence conflict" description="In Ref. 2; AAO69716." evidence="2" ref="2">
    <original>G</original>
    <variation>GAAAR</variation>
    <location>
        <position position="295"/>
    </location>
</feature>
<reference key="1">
    <citation type="journal article" date="2001" name="Nature">
        <title>Complete genome sequence of a multiple drug resistant Salmonella enterica serovar Typhi CT18.</title>
        <authorList>
            <person name="Parkhill J."/>
            <person name="Dougan G."/>
            <person name="James K.D."/>
            <person name="Thomson N.R."/>
            <person name="Pickard D."/>
            <person name="Wain J."/>
            <person name="Churcher C.M."/>
            <person name="Mungall K.L."/>
            <person name="Bentley S.D."/>
            <person name="Holden M.T.G."/>
            <person name="Sebaihia M."/>
            <person name="Baker S."/>
            <person name="Basham D."/>
            <person name="Brooks K."/>
            <person name="Chillingworth T."/>
            <person name="Connerton P."/>
            <person name="Cronin A."/>
            <person name="Davis P."/>
            <person name="Davies R.M."/>
            <person name="Dowd L."/>
            <person name="White N."/>
            <person name="Farrar J."/>
            <person name="Feltwell T."/>
            <person name="Hamlin N."/>
            <person name="Haque A."/>
            <person name="Hien T.T."/>
            <person name="Holroyd S."/>
            <person name="Jagels K."/>
            <person name="Krogh A."/>
            <person name="Larsen T.S."/>
            <person name="Leather S."/>
            <person name="Moule S."/>
            <person name="O'Gaora P."/>
            <person name="Parry C."/>
            <person name="Quail M.A."/>
            <person name="Rutherford K.M."/>
            <person name="Simmonds M."/>
            <person name="Skelton J."/>
            <person name="Stevens K."/>
            <person name="Whitehead S."/>
            <person name="Barrell B.G."/>
        </authorList>
    </citation>
    <scope>NUCLEOTIDE SEQUENCE [LARGE SCALE GENOMIC DNA]</scope>
    <source>
        <strain>CT18</strain>
    </source>
</reference>
<reference key="2">
    <citation type="journal article" date="2003" name="J. Bacteriol.">
        <title>Comparative genomics of Salmonella enterica serovar Typhi strains Ty2 and CT18.</title>
        <authorList>
            <person name="Deng W."/>
            <person name="Liou S.-R."/>
            <person name="Plunkett G. III"/>
            <person name="Mayhew G.F."/>
            <person name="Rose D.J."/>
            <person name="Burland V."/>
            <person name="Kodoyianni V."/>
            <person name="Schwartz D.C."/>
            <person name="Blattner F.R."/>
        </authorList>
    </citation>
    <scope>NUCLEOTIDE SEQUENCE [LARGE SCALE GENOMIC DNA]</scope>
    <source>
        <strain>ATCC 700931 / Ty2</strain>
    </source>
</reference>
<comment type="function">
    <text evidence="1">Catalyzes the conversion of N-formimidoyl-L-glutamate to L-glutamate and formamide.</text>
</comment>
<comment type="catalytic activity">
    <reaction evidence="1">
        <text>N-formimidoyl-L-glutamate + H2O = formamide + L-glutamate</text>
        <dbReference type="Rhea" id="RHEA:22492"/>
        <dbReference type="ChEBI" id="CHEBI:15377"/>
        <dbReference type="ChEBI" id="CHEBI:16397"/>
        <dbReference type="ChEBI" id="CHEBI:29985"/>
        <dbReference type="ChEBI" id="CHEBI:58928"/>
        <dbReference type="EC" id="3.5.3.8"/>
    </reaction>
</comment>
<comment type="cofactor">
    <cofactor evidence="1">
        <name>Mn(2+)</name>
        <dbReference type="ChEBI" id="CHEBI:29035"/>
    </cofactor>
    <text evidence="1">Binds 2 manganese ions per subunit.</text>
</comment>
<comment type="pathway">
    <text evidence="1">Amino-acid degradation; L-histidine degradation into L-glutamate; L-glutamate from N-formimidoyl-L-glutamate (hydrolase route): step 1/1.</text>
</comment>
<comment type="similarity">
    <text evidence="1">Belongs to the arginase family.</text>
</comment>
<sequence length="313" mass="34437">MTQWYPASPALWQGRDDSIEAPDARRLFQTVTRSEAFFPENWQQKIALMGFACDEGVKRNSGRPGAAGGPDALRKALANMASHQGHERLVDLGNWVAPTPDLEGAQQALRDAVSRCLRAGMRTLVMGGGHETAFGHGAGVLDAFAQESVGIINLDAHLDLRQTDRATSGTPFRQLAQLCDAQSRAFHYACFGVSRAANTQALWREAQWRNVTVVEDLDCHDALAQMTQFIDKVDKIYLTIDLDVLPVWEMPAVSAPAALGVPLIQVLRLIEPVCRSGKLQAADLVEFNPRFDEDGAAARVAARLGWQIAHWWR</sequence>
<evidence type="ECO:0000255" key="1">
    <source>
        <dbReference type="HAMAP-Rule" id="MF_00737"/>
    </source>
</evidence>
<evidence type="ECO:0000305" key="2"/>
<dbReference type="EC" id="3.5.3.8" evidence="1"/>
<dbReference type="EMBL" id="AL513382">
    <property type="protein sequence ID" value="CAD05236.1"/>
    <property type="molecule type" value="Genomic_DNA"/>
</dbReference>
<dbReference type="EMBL" id="AE014613">
    <property type="protein sequence ID" value="AAO69716.1"/>
    <property type="molecule type" value="Genomic_DNA"/>
</dbReference>
<dbReference type="RefSeq" id="NP_455330.1">
    <property type="nucleotide sequence ID" value="NC_003198.1"/>
</dbReference>
<dbReference type="RefSeq" id="WP_000195673.1">
    <property type="nucleotide sequence ID" value="NZ_WSUR01000021.1"/>
</dbReference>
<dbReference type="SMR" id="Q8Z899"/>
<dbReference type="STRING" id="220341.gene:17584826"/>
<dbReference type="KEGG" id="stt:t2099"/>
<dbReference type="KEGG" id="sty:STY0821"/>
<dbReference type="PATRIC" id="fig|220341.7.peg.825"/>
<dbReference type="eggNOG" id="COG0010">
    <property type="taxonomic scope" value="Bacteria"/>
</dbReference>
<dbReference type="HOGENOM" id="CLU_039478_2_0_6"/>
<dbReference type="OMA" id="WPFHYAC"/>
<dbReference type="UniPathway" id="UPA00379">
    <property type="reaction ID" value="UER00552"/>
</dbReference>
<dbReference type="Proteomes" id="UP000000541">
    <property type="component" value="Chromosome"/>
</dbReference>
<dbReference type="Proteomes" id="UP000002670">
    <property type="component" value="Chromosome"/>
</dbReference>
<dbReference type="GO" id="GO:0008783">
    <property type="term" value="F:agmatinase activity"/>
    <property type="evidence" value="ECO:0007669"/>
    <property type="project" value="TreeGrafter"/>
</dbReference>
<dbReference type="GO" id="GO:0050415">
    <property type="term" value="F:formimidoylglutamase activity"/>
    <property type="evidence" value="ECO:0007669"/>
    <property type="project" value="UniProtKB-UniRule"/>
</dbReference>
<dbReference type="GO" id="GO:0030145">
    <property type="term" value="F:manganese ion binding"/>
    <property type="evidence" value="ECO:0007669"/>
    <property type="project" value="UniProtKB-UniRule"/>
</dbReference>
<dbReference type="GO" id="GO:0019556">
    <property type="term" value="P:L-histidine catabolic process to glutamate and formamide"/>
    <property type="evidence" value="ECO:0007669"/>
    <property type="project" value="UniProtKB-UniPathway"/>
</dbReference>
<dbReference type="GO" id="GO:0019557">
    <property type="term" value="P:L-histidine catabolic process to glutamate and formate"/>
    <property type="evidence" value="ECO:0007669"/>
    <property type="project" value="UniProtKB-UniPathway"/>
</dbReference>
<dbReference type="GO" id="GO:0033389">
    <property type="term" value="P:putrescine biosynthetic process from arginine, via agmatine"/>
    <property type="evidence" value="ECO:0007669"/>
    <property type="project" value="TreeGrafter"/>
</dbReference>
<dbReference type="CDD" id="cd09988">
    <property type="entry name" value="Formimidoylglutamase"/>
    <property type="match status" value="1"/>
</dbReference>
<dbReference type="FunFam" id="3.40.800.10:FF:000010">
    <property type="entry name" value="Formimidoylglutamase"/>
    <property type="match status" value="1"/>
</dbReference>
<dbReference type="Gene3D" id="3.40.800.10">
    <property type="entry name" value="Ureohydrolase domain"/>
    <property type="match status" value="1"/>
</dbReference>
<dbReference type="HAMAP" id="MF_00737">
    <property type="entry name" value="Formimidoylglutam"/>
    <property type="match status" value="1"/>
</dbReference>
<dbReference type="InterPro" id="IPR005923">
    <property type="entry name" value="HutG"/>
</dbReference>
<dbReference type="InterPro" id="IPR006035">
    <property type="entry name" value="Ureohydrolase"/>
</dbReference>
<dbReference type="InterPro" id="IPR023696">
    <property type="entry name" value="Ureohydrolase_dom_sf"/>
</dbReference>
<dbReference type="NCBIfam" id="TIGR01227">
    <property type="entry name" value="hutG"/>
    <property type="match status" value="1"/>
</dbReference>
<dbReference type="PANTHER" id="PTHR11358">
    <property type="entry name" value="ARGINASE/AGMATINASE"/>
    <property type="match status" value="1"/>
</dbReference>
<dbReference type="PANTHER" id="PTHR11358:SF35">
    <property type="entry name" value="FORMIMIDOYLGLUTAMASE"/>
    <property type="match status" value="1"/>
</dbReference>
<dbReference type="Pfam" id="PF00491">
    <property type="entry name" value="Arginase"/>
    <property type="match status" value="1"/>
</dbReference>
<dbReference type="PIRSF" id="PIRSF036979">
    <property type="entry name" value="Arginase"/>
    <property type="match status" value="1"/>
</dbReference>
<dbReference type="SUPFAM" id="SSF52768">
    <property type="entry name" value="Arginase/deacetylase"/>
    <property type="match status" value="1"/>
</dbReference>
<dbReference type="PROSITE" id="PS51409">
    <property type="entry name" value="ARGINASE_2"/>
    <property type="match status" value="1"/>
</dbReference>
<organism>
    <name type="scientific">Salmonella typhi</name>
    <dbReference type="NCBI Taxonomy" id="90370"/>
    <lineage>
        <taxon>Bacteria</taxon>
        <taxon>Pseudomonadati</taxon>
        <taxon>Pseudomonadota</taxon>
        <taxon>Gammaproteobacteria</taxon>
        <taxon>Enterobacterales</taxon>
        <taxon>Enterobacteriaceae</taxon>
        <taxon>Salmonella</taxon>
    </lineage>
</organism>